<gene>
    <name type="primary">EFHD2</name>
    <name type="synonym">SWS1</name>
</gene>
<dbReference type="EMBL" id="AL031283">
    <property type="status" value="NOT_ANNOTATED_CDS"/>
    <property type="molecule type" value="Genomic_DNA"/>
</dbReference>
<dbReference type="EMBL" id="CH471167">
    <property type="protein sequence ID" value="EAW51720.1"/>
    <property type="molecule type" value="Genomic_DNA"/>
</dbReference>
<dbReference type="EMBL" id="BC007233">
    <property type="protein sequence ID" value="AAH07233.1"/>
    <property type="molecule type" value="mRNA"/>
</dbReference>
<dbReference type="EMBL" id="BC014923">
    <property type="protein sequence ID" value="AAH14923.1"/>
    <property type="molecule type" value="mRNA"/>
</dbReference>
<dbReference type="EMBL" id="BC023611">
    <property type="protein sequence ID" value="AAH23611.1"/>
    <property type="molecule type" value="mRNA"/>
</dbReference>
<dbReference type="EMBL" id="BC068473">
    <property type="protein sequence ID" value="AAH68473.1"/>
    <property type="molecule type" value="mRNA"/>
</dbReference>
<dbReference type="CCDS" id="CCDS155.1"/>
<dbReference type="RefSeq" id="NP_077305.2">
    <property type="nucleotide sequence ID" value="NM_024329.5"/>
</dbReference>
<dbReference type="PDB" id="5H0P">
    <property type="method" value="X-ray"/>
    <property type="resolution" value="1.86 A"/>
    <property type="chains" value="A=70-184"/>
</dbReference>
<dbReference type="PDB" id="5I2L">
    <property type="method" value="X-ray"/>
    <property type="resolution" value="1.85 A"/>
    <property type="chains" value="A=70-184"/>
</dbReference>
<dbReference type="PDB" id="5I2O">
    <property type="method" value="X-ray"/>
    <property type="resolution" value="1.95 A"/>
    <property type="chains" value="A=70-184"/>
</dbReference>
<dbReference type="PDB" id="5I2Q">
    <property type="method" value="X-ray"/>
    <property type="resolution" value="1.94 A"/>
    <property type="chains" value="A=70-184"/>
</dbReference>
<dbReference type="PDB" id="7YGY">
    <property type="method" value="X-ray"/>
    <property type="resolution" value="2.60 A"/>
    <property type="chains" value="A=70-184"/>
</dbReference>
<dbReference type="PDBsum" id="5H0P"/>
<dbReference type="PDBsum" id="5I2L"/>
<dbReference type="PDBsum" id="5I2O"/>
<dbReference type="PDBsum" id="5I2Q"/>
<dbReference type="PDBsum" id="7YGY"/>
<dbReference type="SMR" id="Q96C19"/>
<dbReference type="BioGRID" id="122597">
    <property type="interactions" value="135"/>
</dbReference>
<dbReference type="FunCoup" id="Q96C19">
    <property type="interactions" value="395"/>
</dbReference>
<dbReference type="IntAct" id="Q96C19">
    <property type="interactions" value="54"/>
</dbReference>
<dbReference type="MINT" id="Q96C19"/>
<dbReference type="STRING" id="9606.ENSP00000365147"/>
<dbReference type="GlyGen" id="Q96C19">
    <property type="glycosylation" value="2 sites, 1 N-linked glycan (1 site), 1 O-linked glycan (1 site)"/>
</dbReference>
<dbReference type="iPTMnet" id="Q96C19"/>
<dbReference type="MetOSite" id="Q96C19"/>
<dbReference type="PhosphoSitePlus" id="Q96C19"/>
<dbReference type="SwissPalm" id="Q96C19"/>
<dbReference type="BioMuta" id="EFHD2"/>
<dbReference type="DMDM" id="20140139"/>
<dbReference type="REPRODUCTION-2DPAGE" id="IPI00060181"/>
<dbReference type="jPOST" id="Q96C19"/>
<dbReference type="MassIVE" id="Q96C19"/>
<dbReference type="PaxDb" id="9606-ENSP00000365147"/>
<dbReference type="PeptideAtlas" id="Q96C19"/>
<dbReference type="ProteomicsDB" id="76150"/>
<dbReference type="Pumba" id="Q96C19"/>
<dbReference type="TopDownProteomics" id="Q96C19"/>
<dbReference type="Antibodypedia" id="28833">
    <property type="antibodies" value="167 antibodies from 33 providers"/>
</dbReference>
<dbReference type="DNASU" id="79180"/>
<dbReference type="Ensembl" id="ENST00000375980.9">
    <property type="protein sequence ID" value="ENSP00000365147.4"/>
    <property type="gene ID" value="ENSG00000142634.13"/>
</dbReference>
<dbReference type="GeneID" id="79180"/>
<dbReference type="KEGG" id="hsa:79180"/>
<dbReference type="MANE-Select" id="ENST00000375980.9">
    <property type="protein sequence ID" value="ENSP00000365147.4"/>
    <property type="RefSeq nucleotide sequence ID" value="NM_024329.6"/>
    <property type="RefSeq protein sequence ID" value="NP_077305.2"/>
</dbReference>
<dbReference type="UCSC" id="uc001awh.2">
    <property type="organism name" value="human"/>
</dbReference>
<dbReference type="AGR" id="HGNC:28670"/>
<dbReference type="CTD" id="79180"/>
<dbReference type="DisGeNET" id="79180"/>
<dbReference type="GeneCards" id="EFHD2"/>
<dbReference type="HGNC" id="HGNC:28670">
    <property type="gene designation" value="EFHD2"/>
</dbReference>
<dbReference type="HPA" id="ENSG00000142634">
    <property type="expression patterns" value="Low tissue specificity"/>
</dbReference>
<dbReference type="MIM" id="616450">
    <property type="type" value="gene"/>
</dbReference>
<dbReference type="neXtProt" id="NX_Q96C19"/>
<dbReference type="OpenTargets" id="ENSG00000142634"/>
<dbReference type="PharmGKB" id="PA134942316"/>
<dbReference type="VEuPathDB" id="HostDB:ENSG00000142634"/>
<dbReference type="eggNOG" id="KOG0041">
    <property type="taxonomic scope" value="Eukaryota"/>
</dbReference>
<dbReference type="GeneTree" id="ENSGT00390000012058"/>
<dbReference type="HOGENOM" id="CLU_094429_0_0_1"/>
<dbReference type="InParanoid" id="Q96C19"/>
<dbReference type="OMA" id="ERMFKQY"/>
<dbReference type="OrthoDB" id="6572480at2759"/>
<dbReference type="PAN-GO" id="Q96C19">
    <property type="GO annotations" value="1 GO annotation based on evolutionary models"/>
</dbReference>
<dbReference type="PhylomeDB" id="Q96C19"/>
<dbReference type="TreeFam" id="TF320736"/>
<dbReference type="PathwayCommons" id="Q96C19"/>
<dbReference type="Reactome" id="R-HSA-9013405">
    <property type="pathway name" value="RHOD GTPase cycle"/>
</dbReference>
<dbReference type="SignaLink" id="Q96C19"/>
<dbReference type="BioGRID-ORCS" id="79180">
    <property type="hits" value="24 hits in 1157 CRISPR screens"/>
</dbReference>
<dbReference type="CD-CODE" id="24B12ACB">
    <property type="entry name" value="Synthetic Condensate 000346"/>
</dbReference>
<dbReference type="CD-CODE" id="FB4E32DD">
    <property type="entry name" value="Presynaptic clusters and postsynaptic densities"/>
</dbReference>
<dbReference type="ChiTaRS" id="EFHD2">
    <property type="organism name" value="human"/>
</dbReference>
<dbReference type="GenomeRNAi" id="79180"/>
<dbReference type="Pharos" id="Q96C19">
    <property type="development level" value="Tbio"/>
</dbReference>
<dbReference type="PRO" id="PR:Q96C19"/>
<dbReference type="Proteomes" id="UP000005640">
    <property type="component" value="Chromosome 1"/>
</dbReference>
<dbReference type="RNAct" id="Q96C19">
    <property type="molecule type" value="protein"/>
</dbReference>
<dbReference type="Bgee" id="ENSG00000142634">
    <property type="expression patterns" value="Expressed in granulocyte and 174 other cell types or tissues"/>
</dbReference>
<dbReference type="ExpressionAtlas" id="Q96C19">
    <property type="expression patterns" value="baseline and differential"/>
</dbReference>
<dbReference type="GO" id="GO:0045121">
    <property type="term" value="C:membrane raft"/>
    <property type="evidence" value="ECO:0007669"/>
    <property type="project" value="UniProtKB-SubCell"/>
</dbReference>
<dbReference type="GO" id="GO:0045296">
    <property type="term" value="F:cadherin binding"/>
    <property type="evidence" value="ECO:0007005"/>
    <property type="project" value="BHF-UCL"/>
</dbReference>
<dbReference type="GO" id="GO:0005509">
    <property type="term" value="F:calcium ion binding"/>
    <property type="evidence" value="ECO:0000318"/>
    <property type="project" value="GO_Central"/>
</dbReference>
<dbReference type="CDD" id="cd00051">
    <property type="entry name" value="EFh"/>
    <property type="match status" value="1"/>
</dbReference>
<dbReference type="FunFam" id="1.10.238.10:FF:000112">
    <property type="entry name" value="EF-hand domain family, member D2"/>
    <property type="match status" value="1"/>
</dbReference>
<dbReference type="Gene3D" id="1.10.238.10">
    <property type="entry name" value="EF-hand"/>
    <property type="match status" value="1"/>
</dbReference>
<dbReference type="InterPro" id="IPR049025">
    <property type="entry name" value="AIF-1_EF_pair"/>
</dbReference>
<dbReference type="InterPro" id="IPR011992">
    <property type="entry name" value="EF-hand-dom_pair"/>
</dbReference>
<dbReference type="InterPro" id="IPR002048">
    <property type="entry name" value="EF_hand_dom"/>
</dbReference>
<dbReference type="InterPro" id="IPR040365">
    <property type="entry name" value="EFHD1/2"/>
</dbReference>
<dbReference type="PANTHER" id="PTHR13025">
    <property type="entry name" value="EF-HAND DOMAIN-CONTAINING PROTEIN D"/>
    <property type="match status" value="1"/>
</dbReference>
<dbReference type="PANTHER" id="PTHR13025:SF2">
    <property type="entry name" value="EF-HAND DOMAIN-CONTAINING PROTEIN D2"/>
    <property type="match status" value="1"/>
</dbReference>
<dbReference type="Pfam" id="PF21008">
    <property type="entry name" value="AIF-1"/>
    <property type="match status" value="1"/>
</dbReference>
<dbReference type="SMART" id="SM00054">
    <property type="entry name" value="EFh"/>
    <property type="match status" value="2"/>
</dbReference>
<dbReference type="SUPFAM" id="SSF47473">
    <property type="entry name" value="EF-hand"/>
    <property type="match status" value="1"/>
</dbReference>
<dbReference type="PROSITE" id="PS50222">
    <property type="entry name" value="EF_HAND_2"/>
    <property type="match status" value="2"/>
</dbReference>
<keyword id="KW-0002">3D-structure</keyword>
<keyword id="KW-0007">Acetylation</keyword>
<keyword id="KW-0106">Calcium</keyword>
<keyword id="KW-0903">Direct protein sequencing</keyword>
<keyword id="KW-0472">Membrane</keyword>
<keyword id="KW-0479">Metal-binding</keyword>
<keyword id="KW-0597">Phosphoprotein</keyword>
<keyword id="KW-1267">Proteomics identification</keyword>
<keyword id="KW-1185">Reference proteome</keyword>
<keyword id="KW-0677">Repeat</keyword>
<comment type="function">
    <text evidence="1">May regulate B-cell receptor (BCR)-induced immature and primary B-cell apoptosis. Plays a role as negative regulator of the canonical NF-kappa-B-activating branch. Controls spontaneous apoptosis through the regulation of BCL2L1 abundance.</text>
</comment>
<comment type="subunit">
    <text evidence="7">Interacts with CASP9; with inactive form.</text>
</comment>
<comment type="subcellular location">
    <subcellularLocation>
        <location evidence="1">Membrane raft</location>
    </subcellularLocation>
    <text evidence="1">In a mouse immature B-cell line WEHI-231.</text>
</comment>
<comment type="tissue specificity">
    <text evidence="5 6">Found in lymphocytes; preferentially expressed in CD8+ cells.</text>
</comment>
<evidence type="ECO:0000250" key="1"/>
<evidence type="ECO:0000250" key="2">
    <source>
        <dbReference type="UniProtKB" id="Q9D8Y0"/>
    </source>
</evidence>
<evidence type="ECO:0000255" key="3">
    <source>
        <dbReference type="PROSITE-ProRule" id="PRU00448"/>
    </source>
</evidence>
<evidence type="ECO:0000256" key="4">
    <source>
        <dbReference type="SAM" id="MobiDB-lite"/>
    </source>
</evidence>
<evidence type="ECO:0000269" key="5">
    <source>
    </source>
</evidence>
<evidence type="ECO:0000269" key="6">
    <source>
    </source>
</evidence>
<evidence type="ECO:0000269" key="7">
    <source>
    </source>
</evidence>
<evidence type="ECO:0000269" key="8">
    <source ref="4"/>
</evidence>
<evidence type="ECO:0000305" key="9"/>
<evidence type="ECO:0007744" key="10">
    <source>
    </source>
</evidence>
<evidence type="ECO:0007744" key="11">
    <source>
    </source>
</evidence>
<evidence type="ECO:0007744" key="12">
    <source>
    </source>
</evidence>
<evidence type="ECO:0007744" key="13">
    <source>
    </source>
</evidence>
<evidence type="ECO:0007744" key="14">
    <source>
    </source>
</evidence>
<evidence type="ECO:0007744" key="15">
    <source>
    </source>
</evidence>
<evidence type="ECO:0007744" key="16">
    <source>
    </source>
</evidence>
<evidence type="ECO:0007744" key="17">
    <source>
    </source>
</evidence>
<evidence type="ECO:0007829" key="18">
    <source>
        <dbReference type="PDB" id="5I2L"/>
    </source>
</evidence>
<evidence type="ECO:0007829" key="19">
    <source>
        <dbReference type="PDB" id="7YGY"/>
    </source>
</evidence>
<sequence>MATDELATKLSRRLQMEGEGGGETPEQPGLNGAAAAAAGAPDEAAEALGSADCELSAKLLRRADLNQGIGEPQSPSRRVFNPYTEFKEFSRKQIKDMEKMFKQYDAGRDGFIDLMELKLMMEKLGAPQTHLGLKNMIKEVDEDFDSKLSFREFLLIFRKAAAGELQEDSGLCVLARLSEIDVSSEGVKGAKSFFEAKVQAINVSSRFEEEIKAEQEERKKQAEEMKQRKAAFKELQSTFK</sequence>
<organism>
    <name type="scientific">Homo sapiens</name>
    <name type="common">Human</name>
    <dbReference type="NCBI Taxonomy" id="9606"/>
    <lineage>
        <taxon>Eukaryota</taxon>
        <taxon>Metazoa</taxon>
        <taxon>Chordata</taxon>
        <taxon>Craniata</taxon>
        <taxon>Vertebrata</taxon>
        <taxon>Euteleostomi</taxon>
        <taxon>Mammalia</taxon>
        <taxon>Eutheria</taxon>
        <taxon>Euarchontoglires</taxon>
        <taxon>Primates</taxon>
        <taxon>Haplorrhini</taxon>
        <taxon>Catarrhini</taxon>
        <taxon>Hominidae</taxon>
        <taxon>Homo</taxon>
    </lineage>
</organism>
<feature type="initiator methionine" description="Removed" evidence="8 14 15">
    <location>
        <position position="1"/>
    </location>
</feature>
<feature type="chain" id="PRO_0000073645" description="EF-hand domain-containing protein D2">
    <location>
        <begin position="2"/>
        <end position="240"/>
    </location>
</feature>
<feature type="domain" description="EF-hand 1" evidence="3">
    <location>
        <begin position="92"/>
        <end position="127"/>
    </location>
</feature>
<feature type="domain" description="EF-hand 2" evidence="3">
    <location>
        <begin position="128"/>
        <end position="163"/>
    </location>
</feature>
<feature type="region of interest" description="Disordered" evidence="4">
    <location>
        <begin position="13"/>
        <end position="38"/>
    </location>
</feature>
<feature type="binding site" evidence="9">
    <location>
        <position position="105"/>
    </location>
    <ligand>
        <name>Ca(2+)</name>
        <dbReference type="ChEBI" id="CHEBI:29108"/>
        <label>1</label>
    </ligand>
</feature>
<feature type="binding site" evidence="9">
    <location>
        <position position="109"/>
    </location>
    <ligand>
        <name>Ca(2+)</name>
        <dbReference type="ChEBI" id="CHEBI:29108"/>
        <label>1</label>
    </ligand>
</feature>
<feature type="binding site" evidence="9">
    <location>
        <position position="116"/>
    </location>
    <ligand>
        <name>Ca(2+)</name>
        <dbReference type="ChEBI" id="CHEBI:29108"/>
        <label>1</label>
    </ligand>
</feature>
<feature type="binding site" evidence="9">
    <location>
        <position position="141"/>
    </location>
    <ligand>
        <name>Ca(2+)</name>
        <dbReference type="ChEBI" id="CHEBI:29108"/>
        <label>2</label>
    </ligand>
</feature>
<feature type="binding site" evidence="9">
    <location>
        <position position="143"/>
    </location>
    <ligand>
        <name>Ca(2+)</name>
        <dbReference type="ChEBI" id="CHEBI:29108"/>
        <label>2</label>
    </ligand>
</feature>
<feature type="binding site" evidence="9">
    <location>
        <position position="145"/>
    </location>
    <ligand>
        <name>Ca(2+)</name>
        <dbReference type="ChEBI" id="CHEBI:29108"/>
        <label>2</label>
    </ligand>
</feature>
<feature type="binding site" evidence="9">
    <location>
        <position position="147"/>
    </location>
    <ligand>
        <name>Ca(2+)</name>
        <dbReference type="ChEBI" id="CHEBI:29108"/>
        <label>2</label>
    </ligand>
</feature>
<feature type="binding site" evidence="9">
    <location>
        <position position="152"/>
    </location>
    <ligand>
        <name>Ca(2+)</name>
        <dbReference type="ChEBI" id="CHEBI:29108"/>
        <label>2</label>
    </ligand>
</feature>
<feature type="modified residue" description="N-acetylalanine" evidence="8 14 15">
    <location>
        <position position="2"/>
    </location>
</feature>
<feature type="modified residue" description="Phosphoserine" evidence="14 16">
    <location>
        <position position="11"/>
    </location>
</feature>
<feature type="modified residue" description="Phosphoserine" evidence="10 11 13 14 16 17">
    <location>
        <position position="74"/>
    </location>
</feature>
<feature type="modified residue" description="Phosphoserine" evidence="11 14 16 17">
    <location>
        <position position="76"/>
    </location>
</feature>
<feature type="modified residue" description="Phosphotyrosine" evidence="2">
    <location>
        <position position="83"/>
    </location>
</feature>
<feature type="modified residue" description="N6-acetyllysine" evidence="12">
    <location>
        <position position="233"/>
    </location>
</feature>
<feature type="helix" evidence="18">
    <location>
        <begin position="82"/>
        <end position="85"/>
    </location>
</feature>
<feature type="helix" evidence="18">
    <location>
        <begin position="91"/>
        <end position="104"/>
    </location>
</feature>
<feature type="strand" evidence="18">
    <location>
        <begin position="109"/>
        <end position="112"/>
    </location>
</feature>
<feature type="helix" evidence="18">
    <location>
        <begin position="114"/>
        <end position="124"/>
    </location>
</feature>
<feature type="helix" evidence="18">
    <location>
        <begin position="130"/>
        <end position="140"/>
    </location>
</feature>
<feature type="strand" evidence="18">
    <location>
        <begin position="145"/>
        <end position="149"/>
    </location>
</feature>
<feature type="helix" evidence="18">
    <location>
        <begin position="150"/>
        <end position="161"/>
    </location>
</feature>
<feature type="strand" evidence="19">
    <location>
        <begin position="167"/>
        <end position="169"/>
    </location>
</feature>
<feature type="helix" evidence="18">
    <location>
        <begin position="170"/>
        <end position="177"/>
    </location>
</feature>
<protein>
    <recommendedName>
        <fullName>EF-hand domain-containing protein D2</fullName>
    </recommendedName>
    <alternativeName>
        <fullName>Swiprosin-1</fullName>
    </alternativeName>
</protein>
<accession>Q96C19</accession>
<accession>Q5JYW9</accession>
<name>EFHD2_HUMAN</name>
<reference key="1">
    <citation type="journal article" date="2006" name="Nature">
        <title>The DNA sequence and biological annotation of human chromosome 1.</title>
        <authorList>
            <person name="Gregory S.G."/>
            <person name="Barlow K.F."/>
            <person name="McLay K.E."/>
            <person name="Kaul R."/>
            <person name="Swarbreck D."/>
            <person name="Dunham A."/>
            <person name="Scott C.E."/>
            <person name="Howe K.L."/>
            <person name="Woodfine K."/>
            <person name="Spencer C.C.A."/>
            <person name="Jones M.C."/>
            <person name="Gillson C."/>
            <person name="Searle S."/>
            <person name="Zhou Y."/>
            <person name="Kokocinski F."/>
            <person name="McDonald L."/>
            <person name="Evans R."/>
            <person name="Phillips K."/>
            <person name="Atkinson A."/>
            <person name="Cooper R."/>
            <person name="Jones C."/>
            <person name="Hall R.E."/>
            <person name="Andrews T.D."/>
            <person name="Lloyd C."/>
            <person name="Ainscough R."/>
            <person name="Almeida J.P."/>
            <person name="Ambrose K.D."/>
            <person name="Anderson F."/>
            <person name="Andrew R.W."/>
            <person name="Ashwell R.I.S."/>
            <person name="Aubin K."/>
            <person name="Babbage A.K."/>
            <person name="Bagguley C.L."/>
            <person name="Bailey J."/>
            <person name="Beasley H."/>
            <person name="Bethel G."/>
            <person name="Bird C.P."/>
            <person name="Bray-Allen S."/>
            <person name="Brown J.Y."/>
            <person name="Brown A.J."/>
            <person name="Buckley D."/>
            <person name="Burton J."/>
            <person name="Bye J."/>
            <person name="Carder C."/>
            <person name="Chapman J.C."/>
            <person name="Clark S.Y."/>
            <person name="Clarke G."/>
            <person name="Clee C."/>
            <person name="Cobley V."/>
            <person name="Collier R.E."/>
            <person name="Corby N."/>
            <person name="Coville G.J."/>
            <person name="Davies J."/>
            <person name="Deadman R."/>
            <person name="Dunn M."/>
            <person name="Earthrowl M."/>
            <person name="Ellington A.G."/>
            <person name="Errington H."/>
            <person name="Frankish A."/>
            <person name="Frankland J."/>
            <person name="French L."/>
            <person name="Garner P."/>
            <person name="Garnett J."/>
            <person name="Gay L."/>
            <person name="Ghori M.R.J."/>
            <person name="Gibson R."/>
            <person name="Gilby L.M."/>
            <person name="Gillett W."/>
            <person name="Glithero R.J."/>
            <person name="Grafham D.V."/>
            <person name="Griffiths C."/>
            <person name="Griffiths-Jones S."/>
            <person name="Grocock R."/>
            <person name="Hammond S."/>
            <person name="Harrison E.S.I."/>
            <person name="Hart E."/>
            <person name="Haugen E."/>
            <person name="Heath P.D."/>
            <person name="Holmes S."/>
            <person name="Holt K."/>
            <person name="Howden P.J."/>
            <person name="Hunt A.R."/>
            <person name="Hunt S.E."/>
            <person name="Hunter G."/>
            <person name="Isherwood J."/>
            <person name="James R."/>
            <person name="Johnson C."/>
            <person name="Johnson D."/>
            <person name="Joy A."/>
            <person name="Kay M."/>
            <person name="Kershaw J.K."/>
            <person name="Kibukawa M."/>
            <person name="Kimberley A.M."/>
            <person name="King A."/>
            <person name="Knights A.J."/>
            <person name="Lad H."/>
            <person name="Laird G."/>
            <person name="Lawlor S."/>
            <person name="Leongamornlert D.A."/>
            <person name="Lloyd D.M."/>
            <person name="Loveland J."/>
            <person name="Lovell J."/>
            <person name="Lush M.J."/>
            <person name="Lyne R."/>
            <person name="Martin S."/>
            <person name="Mashreghi-Mohammadi M."/>
            <person name="Matthews L."/>
            <person name="Matthews N.S.W."/>
            <person name="McLaren S."/>
            <person name="Milne S."/>
            <person name="Mistry S."/>
            <person name="Moore M.J.F."/>
            <person name="Nickerson T."/>
            <person name="O'Dell C.N."/>
            <person name="Oliver K."/>
            <person name="Palmeiri A."/>
            <person name="Palmer S.A."/>
            <person name="Parker A."/>
            <person name="Patel D."/>
            <person name="Pearce A.V."/>
            <person name="Peck A.I."/>
            <person name="Pelan S."/>
            <person name="Phelps K."/>
            <person name="Phillimore B.J."/>
            <person name="Plumb R."/>
            <person name="Rajan J."/>
            <person name="Raymond C."/>
            <person name="Rouse G."/>
            <person name="Saenphimmachak C."/>
            <person name="Sehra H.K."/>
            <person name="Sheridan E."/>
            <person name="Shownkeen R."/>
            <person name="Sims S."/>
            <person name="Skuce C.D."/>
            <person name="Smith M."/>
            <person name="Steward C."/>
            <person name="Subramanian S."/>
            <person name="Sycamore N."/>
            <person name="Tracey A."/>
            <person name="Tromans A."/>
            <person name="Van Helmond Z."/>
            <person name="Wall M."/>
            <person name="Wallis J.M."/>
            <person name="White S."/>
            <person name="Whitehead S.L."/>
            <person name="Wilkinson J.E."/>
            <person name="Willey D.L."/>
            <person name="Williams H."/>
            <person name="Wilming L."/>
            <person name="Wray P.W."/>
            <person name="Wu Z."/>
            <person name="Coulson A."/>
            <person name="Vaudin M."/>
            <person name="Sulston J.E."/>
            <person name="Durbin R.M."/>
            <person name="Hubbard T."/>
            <person name="Wooster R."/>
            <person name="Dunham I."/>
            <person name="Carter N.P."/>
            <person name="McVean G."/>
            <person name="Ross M.T."/>
            <person name="Harrow J."/>
            <person name="Olson M.V."/>
            <person name="Beck S."/>
            <person name="Rogers J."/>
            <person name="Bentley D.R."/>
        </authorList>
    </citation>
    <scope>NUCLEOTIDE SEQUENCE [LARGE SCALE GENOMIC DNA]</scope>
</reference>
<reference key="2">
    <citation type="submission" date="2005-07" db="EMBL/GenBank/DDBJ databases">
        <authorList>
            <person name="Mural R.J."/>
            <person name="Istrail S."/>
            <person name="Sutton G.G."/>
            <person name="Florea L."/>
            <person name="Halpern A.L."/>
            <person name="Mobarry C.M."/>
            <person name="Lippert R."/>
            <person name="Walenz B."/>
            <person name="Shatkay H."/>
            <person name="Dew I."/>
            <person name="Miller J.R."/>
            <person name="Flanigan M.J."/>
            <person name="Edwards N.J."/>
            <person name="Bolanos R."/>
            <person name="Fasulo D."/>
            <person name="Halldorsson B.V."/>
            <person name="Hannenhalli S."/>
            <person name="Turner R."/>
            <person name="Yooseph S."/>
            <person name="Lu F."/>
            <person name="Nusskern D.R."/>
            <person name="Shue B.C."/>
            <person name="Zheng X.H."/>
            <person name="Zhong F."/>
            <person name="Delcher A.L."/>
            <person name="Huson D.H."/>
            <person name="Kravitz S.A."/>
            <person name="Mouchard L."/>
            <person name="Reinert K."/>
            <person name="Remington K.A."/>
            <person name="Clark A.G."/>
            <person name="Waterman M.S."/>
            <person name="Eichler E.E."/>
            <person name="Adams M.D."/>
            <person name="Hunkapiller M.W."/>
            <person name="Myers E.W."/>
            <person name="Venter J.C."/>
        </authorList>
    </citation>
    <scope>NUCLEOTIDE SEQUENCE [LARGE SCALE GENOMIC DNA]</scope>
</reference>
<reference key="3">
    <citation type="journal article" date="2004" name="Genome Res.">
        <title>The status, quality, and expansion of the NIH full-length cDNA project: the Mammalian Gene Collection (MGC).</title>
        <authorList>
            <consortium name="The MGC Project Team"/>
        </authorList>
    </citation>
    <scope>NUCLEOTIDE SEQUENCE [LARGE SCALE MRNA]</scope>
    <source>
        <tissue>Lung</tissue>
        <tissue>Muscle</tissue>
        <tissue>Testis</tissue>
        <tissue>Uterus</tissue>
    </source>
</reference>
<reference key="4">
    <citation type="submission" date="2008-02" db="UniProtKB">
        <authorList>
            <person name="Bienvenut W.V."/>
            <person name="Calvo F."/>
        </authorList>
    </citation>
    <scope>PROTEIN SEQUENCE OF 2-12; 62-78; 103-118; 124-134; 139-159; 177-188 AND 230-240</scope>
    <scope>CLEAVAGE OF INITIATOR METHIONINE</scope>
    <scope>ACETYLATION AT ALA-2</scope>
    <scope>IDENTIFICATION BY MASS SPECTROMETRY</scope>
    <source>
        <tissue>Cervix carcinoma</tissue>
    </source>
</reference>
<reference key="5">
    <citation type="submission" date="2008-12" db="UniProtKB">
        <authorList>
            <person name="Lubec G."/>
            <person name="Chen W.-Q."/>
            <person name="Sun Y."/>
        </authorList>
    </citation>
    <scope>PROTEIN SEQUENCE OF 63-77; 79-87; 160-176 AND 207-218</scope>
    <scope>IDENTIFICATION BY MASS SPECTROMETRY</scope>
    <source>
        <tissue>Fetal brain cortex</tissue>
    </source>
</reference>
<reference key="6">
    <citation type="journal article" date="2002" name="Proteomics">
        <title>Identification of specific proteins in different lymphocyte populations by proteomic tools.</title>
        <authorList>
            <person name="Vuadens F."/>
            <person name="Gasparini D."/>
            <person name="Deon C."/>
            <person name="Sanchez J.-C."/>
            <person name="Hochstrasser D.F."/>
            <person name="Schneider P."/>
            <person name="Tissot J.-D."/>
        </authorList>
    </citation>
    <scope>IDENTIFICATION</scope>
    <scope>TISSUE SPECIFICITY</scope>
</reference>
<reference key="7">
    <citation type="journal article" date="2004" name="Proteomics">
        <title>Identification of swiprosin 1 in human lymphocytes.</title>
        <authorList>
            <person name="Vuadens F."/>
            <person name="Rufer N."/>
            <person name="Kress A."/>
            <person name="Corthesy P."/>
            <person name="Schneider P."/>
            <person name="Tissot J.-D."/>
        </authorList>
    </citation>
    <scope>TISSUE SPECIFICITY</scope>
    <scope>IDENTIFICATION BY MASS SPECTROMETRY</scope>
</reference>
<reference key="8">
    <citation type="journal article" date="2006" name="Cell">
        <title>Global, in vivo, and site-specific phosphorylation dynamics in signaling networks.</title>
        <authorList>
            <person name="Olsen J.V."/>
            <person name="Blagoev B."/>
            <person name="Gnad F."/>
            <person name="Macek B."/>
            <person name="Kumar C."/>
            <person name="Mortensen P."/>
            <person name="Mann M."/>
        </authorList>
    </citation>
    <scope>IDENTIFICATION BY MASS SPECTROMETRY [LARGE SCALE ANALYSIS]</scope>
    <source>
        <tissue>Cervix carcinoma</tissue>
    </source>
</reference>
<reference key="9">
    <citation type="journal article" date="2006" name="Nat. Biotechnol.">
        <title>A probability-based approach for high-throughput protein phosphorylation analysis and site localization.</title>
        <authorList>
            <person name="Beausoleil S.A."/>
            <person name="Villen J."/>
            <person name="Gerber S.A."/>
            <person name="Rush J."/>
            <person name="Gygi S.P."/>
        </authorList>
    </citation>
    <scope>PHOSPHORYLATION [LARGE SCALE ANALYSIS] AT SER-74</scope>
    <scope>IDENTIFICATION BY MASS SPECTROMETRY [LARGE SCALE ANALYSIS]</scope>
    <source>
        <tissue>Cervix carcinoma</tissue>
    </source>
</reference>
<reference key="10">
    <citation type="journal article" date="2008" name="Mol. Cell">
        <title>Kinase-selective enrichment enables quantitative phosphoproteomics of the kinome across the cell cycle.</title>
        <authorList>
            <person name="Daub H."/>
            <person name="Olsen J.V."/>
            <person name="Bairlein M."/>
            <person name="Gnad F."/>
            <person name="Oppermann F.S."/>
            <person name="Korner R."/>
            <person name="Greff Z."/>
            <person name="Keri G."/>
            <person name="Stemmann O."/>
            <person name="Mann M."/>
        </authorList>
    </citation>
    <scope>IDENTIFICATION BY MASS SPECTROMETRY [LARGE SCALE ANALYSIS]</scope>
    <source>
        <tissue>Cervix carcinoma</tissue>
    </source>
</reference>
<reference key="11">
    <citation type="journal article" date="2008" name="Proc. Natl. Acad. Sci. U.S.A.">
        <title>A quantitative atlas of mitotic phosphorylation.</title>
        <authorList>
            <person name="Dephoure N."/>
            <person name="Zhou C."/>
            <person name="Villen J."/>
            <person name="Beausoleil S.A."/>
            <person name="Bakalarski C.E."/>
            <person name="Elledge S.J."/>
            <person name="Gygi S.P."/>
        </authorList>
    </citation>
    <scope>PHOSPHORYLATION [LARGE SCALE ANALYSIS] AT SER-74 AND SER-76</scope>
    <scope>IDENTIFICATION BY MASS SPECTROMETRY [LARGE SCALE ANALYSIS]</scope>
    <source>
        <tissue>Cervix carcinoma</tissue>
    </source>
</reference>
<reference key="12">
    <citation type="journal article" date="2009" name="Anal. Chem.">
        <title>Lys-N and trypsin cover complementary parts of the phosphoproteome in a refined SCX-based approach.</title>
        <authorList>
            <person name="Gauci S."/>
            <person name="Helbig A.O."/>
            <person name="Slijper M."/>
            <person name="Krijgsveld J."/>
            <person name="Heck A.J."/>
            <person name="Mohammed S."/>
        </authorList>
    </citation>
    <scope>IDENTIFICATION BY MASS SPECTROMETRY [LARGE SCALE ANALYSIS]</scope>
</reference>
<reference key="13">
    <citation type="journal article" date="2009" name="J. Proteomics">
        <title>Comparative proteomics analysis of caspase-9-protein complexes in untreated and cytochrome c/dATP stimulated lysates of NSCLC cells.</title>
        <authorList>
            <person name="Checinska A."/>
            <person name="Giaccone G."/>
            <person name="Rodriguez J.A."/>
            <person name="Kruyt F.A.E."/>
            <person name="Jimenez C.R."/>
        </authorList>
    </citation>
    <scope>INTERACTION WITH CASP9</scope>
    <scope>IDENTIFICATION BY MASS SPECTROMETRY</scope>
</reference>
<reference key="14">
    <citation type="journal article" date="2009" name="Sci. Signal.">
        <title>Quantitative phosphoproteomic analysis of T cell receptor signaling reveals system-wide modulation of protein-protein interactions.</title>
        <authorList>
            <person name="Mayya V."/>
            <person name="Lundgren D.H."/>
            <person name="Hwang S.-I."/>
            <person name="Rezaul K."/>
            <person name="Wu L."/>
            <person name="Eng J.K."/>
            <person name="Rodionov V."/>
            <person name="Han D.K."/>
        </authorList>
    </citation>
    <scope>PHOSPHORYLATION [LARGE SCALE ANALYSIS] AT SER-74</scope>
    <scope>IDENTIFICATION BY MASS SPECTROMETRY [LARGE SCALE ANALYSIS]</scope>
    <source>
        <tissue>Leukemic T-cell</tissue>
    </source>
</reference>
<reference key="15">
    <citation type="journal article" date="2009" name="Science">
        <title>Lysine acetylation targets protein complexes and co-regulates major cellular functions.</title>
        <authorList>
            <person name="Choudhary C."/>
            <person name="Kumar C."/>
            <person name="Gnad F."/>
            <person name="Nielsen M.L."/>
            <person name="Rehman M."/>
            <person name="Walther T.C."/>
            <person name="Olsen J.V."/>
            <person name="Mann M."/>
        </authorList>
    </citation>
    <scope>ACETYLATION [LARGE SCALE ANALYSIS] AT LYS-233</scope>
    <scope>IDENTIFICATION BY MASS SPECTROMETRY [LARGE SCALE ANALYSIS]</scope>
</reference>
<reference key="16">
    <citation type="journal article" date="2010" name="Sci. Signal.">
        <title>Quantitative phosphoproteomics reveals widespread full phosphorylation site occupancy during mitosis.</title>
        <authorList>
            <person name="Olsen J.V."/>
            <person name="Vermeulen M."/>
            <person name="Santamaria A."/>
            <person name="Kumar C."/>
            <person name="Miller M.L."/>
            <person name="Jensen L.J."/>
            <person name="Gnad F."/>
            <person name="Cox J."/>
            <person name="Jensen T.S."/>
            <person name="Nigg E.A."/>
            <person name="Brunak S."/>
            <person name="Mann M."/>
        </authorList>
    </citation>
    <scope>ACETYLATION [LARGE SCALE ANALYSIS] AT ALA-2</scope>
    <scope>PHOSPHORYLATION [LARGE SCALE ANALYSIS] AT SER-11; SER-74 AND SER-76</scope>
    <scope>CLEAVAGE OF INITIATOR METHIONINE [LARGE SCALE ANALYSIS]</scope>
    <scope>IDENTIFICATION BY MASS SPECTROMETRY [LARGE SCALE ANALYSIS]</scope>
    <source>
        <tissue>Cervix carcinoma</tissue>
    </source>
</reference>
<reference key="17">
    <citation type="journal article" date="2011" name="BMC Syst. Biol.">
        <title>Initial characterization of the human central proteome.</title>
        <authorList>
            <person name="Burkard T.R."/>
            <person name="Planyavsky M."/>
            <person name="Kaupe I."/>
            <person name="Breitwieser F.P."/>
            <person name="Buerckstuemmer T."/>
            <person name="Bennett K.L."/>
            <person name="Superti-Furga G."/>
            <person name="Colinge J."/>
        </authorList>
    </citation>
    <scope>IDENTIFICATION BY MASS SPECTROMETRY [LARGE SCALE ANALYSIS]</scope>
</reference>
<reference key="18">
    <citation type="journal article" date="2012" name="Proc. Natl. Acad. Sci. U.S.A.">
        <title>N-terminal acetylome analyses and functional insights of the N-terminal acetyltransferase NatB.</title>
        <authorList>
            <person name="Van Damme P."/>
            <person name="Lasa M."/>
            <person name="Polevoda B."/>
            <person name="Gazquez C."/>
            <person name="Elosegui-Artola A."/>
            <person name="Kim D.S."/>
            <person name="De Juan-Pardo E."/>
            <person name="Demeyer K."/>
            <person name="Hole K."/>
            <person name="Larrea E."/>
            <person name="Timmerman E."/>
            <person name="Prieto J."/>
            <person name="Arnesen T."/>
            <person name="Sherman F."/>
            <person name="Gevaert K."/>
            <person name="Aldabe R."/>
        </authorList>
    </citation>
    <scope>ACETYLATION [LARGE SCALE ANALYSIS] AT ALA-2</scope>
    <scope>CLEAVAGE OF INITIATOR METHIONINE [LARGE SCALE ANALYSIS]</scope>
    <scope>IDENTIFICATION BY MASS SPECTROMETRY [LARGE SCALE ANALYSIS]</scope>
</reference>
<reference key="19">
    <citation type="journal article" date="2013" name="J. Proteome Res.">
        <title>Toward a comprehensive characterization of a human cancer cell phosphoproteome.</title>
        <authorList>
            <person name="Zhou H."/>
            <person name="Di Palma S."/>
            <person name="Preisinger C."/>
            <person name="Peng M."/>
            <person name="Polat A.N."/>
            <person name="Heck A.J."/>
            <person name="Mohammed S."/>
        </authorList>
    </citation>
    <scope>PHOSPHORYLATION [LARGE SCALE ANALYSIS] AT SER-11; SER-74 AND SER-76</scope>
    <scope>IDENTIFICATION BY MASS SPECTROMETRY [LARGE SCALE ANALYSIS]</scope>
    <source>
        <tissue>Cervix carcinoma</tissue>
        <tissue>Erythroleukemia</tissue>
    </source>
</reference>
<reference key="20">
    <citation type="journal article" date="2014" name="J. Proteomics">
        <title>An enzyme assisted RP-RPLC approach for in-depth analysis of human liver phosphoproteome.</title>
        <authorList>
            <person name="Bian Y."/>
            <person name="Song C."/>
            <person name="Cheng K."/>
            <person name="Dong M."/>
            <person name="Wang F."/>
            <person name="Huang J."/>
            <person name="Sun D."/>
            <person name="Wang L."/>
            <person name="Ye M."/>
            <person name="Zou H."/>
        </authorList>
    </citation>
    <scope>PHOSPHORYLATION [LARGE SCALE ANALYSIS] AT SER-74 AND SER-76</scope>
    <scope>IDENTIFICATION BY MASS SPECTROMETRY [LARGE SCALE ANALYSIS]</scope>
    <source>
        <tissue>Liver</tissue>
    </source>
</reference>
<reference key="21">
    <citation type="journal article" date="2015" name="Proteomics">
        <title>N-terminome analysis of the human mitochondrial proteome.</title>
        <authorList>
            <person name="Vaca Jacome A.S."/>
            <person name="Rabilloud T."/>
            <person name="Schaeffer-Reiss C."/>
            <person name="Rompais M."/>
            <person name="Ayoub D."/>
            <person name="Lane L."/>
            <person name="Bairoch A."/>
            <person name="Van Dorsselaer A."/>
            <person name="Carapito C."/>
        </authorList>
    </citation>
    <scope>IDENTIFICATION BY MASS SPECTROMETRY [LARGE SCALE ANALYSIS]</scope>
</reference>
<proteinExistence type="evidence at protein level"/>